<organism>
    <name type="scientific">Photorhabdus laumondii subsp. laumondii (strain DSM 15139 / CIP 105565 / TT01)</name>
    <name type="common">Photorhabdus luminescens subsp. laumondii</name>
    <dbReference type="NCBI Taxonomy" id="243265"/>
    <lineage>
        <taxon>Bacteria</taxon>
        <taxon>Pseudomonadati</taxon>
        <taxon>Pseudomonadota</taxon>
        <taxon>Gammaproteobacteria</taxon>
        <taxon>Enterobacterales</taxon>
        <taxon>Morganellaceae</taxon>
        <taxon>Photorhabdus</taxon>
    </lineage>
</organism>
<reference key="1">
    <citation type="journal article" date="2003" name="Nat. Biotechnol.">
        <title>The genome sequence of the entomopathogenic bacterium Photorhabdus luminescens.</title>
        <authorList>
            <person name="Duchaud E."/>
            <person name="Rusniok C."/>
            <person name="Frangeul L."/>
            <person name="Buchrieser C."/>
            <person name="Givaudan A."/>
            <person name="Taourit S."/>
            <person name="Bocs S."/>
            <person name="Boursaux-Eude C."/>
            <person name="Chandler M."/>
            <person name="Charles J.-F."/>
            <person name="Dassa E."/>
            <person name="Derose R."/>
            <person name="Derzelle S."/>
            <person name="Freyssinet G."/>
            <person name="Gaudriault S."/>
            <person name="Medigue C."/>
            <person name="Lanois A."/>
            <person name="Powell K."/>
            <person name="Siguier P."/>
            <person name="Vincent R."/>
            <person name="Wingate V."/>
            <person name="Zouine M."/>
            <person name="Glaser P."/>
            <person name="Boemare N."/>
            <person name="Danchin A."/>
            <person name="Kunst F."/>
        </authorList>
    </citation>
    <scope>NUCLEOTIDE SEQUENCE [LARGE SCALE GENOMIC DNA]</scope>
    <source>
        <strain>DSM 15139 / CIP 105565 / TT01</strain>
    </source>
</reference>
<gene>
    <name type="ordered locus">plu3956</name>
</gene>
<evidence type="ECO:0000255" key="1">
    <source>
        <dbReference type="HAMAP-Rule" id="MF_01188"/>
    </source>
</evidence>
<evidence type="ECO:0000256" key="2">
    <source>
        <dbReference type="SAM" id="MobiDB-lite"/>
    </source>
</evidence>
<feature type="chain" id="PRO_0000293638" description="UPF0441 protein plu3956">
    <location>
        <begin position="1"/>
        <end position="234"/>
    </location>
</feature>
<feature type="region of interest" description="Disordered" evidence="2">
    <location>
        <begin position="105"/>
        <end position="129"/>
    </location>
</feature>
<feature type="region of interest" description="Disordered" evidence="2">
    <location>
        <begin position="149"/>
        <end position="234"/>
    </location>
</feature>
<feature type="compositionally biased region" description="Low complexity" evidence="2">
    <location>
        <begin position="110"/>
        <end position="127"/>
    </location>
</feature>
<feature type="compositionally biased region" description="Polar residues" evidence="2">
    <location>
        <begin position="150"/>
        <end position="175"/>
    </location>
</feature>
<feature type="compositionally biased region" description="Low complexity" evidence="2">
    <location>
        <begin position="188"/>
        <end position="205"/>
    </location>
</feature>
<feature type="compositionally biased region" description="Low complexity" evidence="2">
    <location>
        <begin position="216"/>
        <end position="234"/>
    </location>
</feature>
<accession>Q7N0D4</accession>
<proteinExistence type="inferred from homology"/>
<keyword id="KW-1185">Reference proteome</keyword>
<dbReference type="EMBL" id="BX571872">
    <property type="protein sequence ID" value="CAE16328.1"/>
    <property type="molecule type" value="Genomic_DNA"/>
</dbReference>
<dbReference type="RefSeq" id="WP_011148090.1">
    <property type="nucleotide sequence ID" value="NC_005126.1"/>
</dbReference>
<dbReference type="STRING" id="243265.plu3956"/>
<dbReference type="GeneID" id="48850183"/>
<dbReference type="KEGG" id="plu:plu3956"/>
<dbReference type="eggNOG" id="COG5463">
    <property type="taxonomic scope" value="Bacteria"/>
</dbReference>
<dbReference type="HOGENOM" id="CLU_095624_0_0_6"/>
<dbReference type="OrthoDB" id="5903948at2"/>
<dbReference type="Proteomes" id="UP000002514">
    <property type="component" value="Chromosome"/>
</dbReference>
<dbReference type="HAMAP" id="MF_01188">
    <property type="entry name" value="UPF0441"/>
    <property type="match status" value="1"/>
</dbReference>
<dbReference type="InterPro" id="IPR009576">
    <property type="entry name" value="Biofilm_formation_YgiB"/>
</dbReference>
<dbReference type="NCBIfam" id="NF008655">
    <property type="entry name" value="PRK11653.1"/>
    <property type="match status" value="1"/>
</dbReference>
<dbReference type="Pfam" id="PF06693">
    <property type="entry name" value="DUF1190"/>
    <property type="match status" value="1"/>
</dbReference>
<comment type="similarity">
    <text evidence="1">Belongs to the UPF0441 family.</text>
</comment>
<sequence length="234" mass="24514">MTIKRTKDINHDTFRKAWRNYRLAPVAIAVSAVFMLSACEKSDETVSLYMNADECSQANPSQSEQCTTAYNNALKEAEKTAPKYATKEDCIAEFGEAQCTQTPAQAGLGTTTSSTSTNGEAQAQQQQSGSFWMPLMAGYMMGRLMGGGSAPSQPLFSSKSATSPANGQFVDSTGKSYGPATAGGRSMTVPKTAMAPKPATTTTITRGGFGDSVAKQSTMQRSASSGSTSRSVGG</sequence>
<name>Y3956_PHOLL</name>
<protein>
    <recommendedName>
        <fullName evidence="1">UPF0441 protein plu3956</fullName>
    </recommendedName>
</protein>